<evidence type="ECO:0000255" key="1">
    <source>
        <dbReference type="HAMAP-Rule" id="MF_00478"/>
    </source>
</evidence>
<keyword id="KW-0997">Cell inner membrane</keyword>
<keyword id="KW-1003">Cell membrane</keyword>
<keyword id="KW-0249">Electron transport</keyword>
<keyword id="KW-0472">Membrane</keyword>
<keyword id="KW-1278">Translocase</keyword>
<keyword id="KW-0812">Transmembrane</keyword>
<keyword id="KW-1133">Transmembrane helix</keyword>
<keyword id="KW-0813">Transport</keyword>
<accession>Q2NT00</accession>
<organism>
    <name type="scientific">Sodalis glossinidius (strain morsitans)</name>
    <dbReference type="NCBI Taxonomy" id="343509"/>
    <lineage>
        <taxon>Bacteria</taxon>
        <taxon>Pseudomonadati</taxon>
        <taxon>Pseudomonadota</taxon>
        <taxon>Gammaproteobacteria</taxon>
        <taxon>Enterobacterales</taxon>
        <taxon>Bruguierivoracaceae</taxon>
        <taxon>Sodalis</taxon>
    </lineage>
</organism>
<name>RNFE_SODGM</name>
<gene>
    <name evidence="1" type="primary">rnfE</name>
    <name type="ordered locus">SG1450</name>
</gene>
<sequence length="232" mass="24824">MNEAKRILLEGLWRNNSSLVQLLGLCPLLAVSNTATNALGLGLATTLVLVCTNTAVSALRRWITGEIRIPIYVMIIASVVSAVQMLINAYAFGLYQSLGIFIPLIVTNCIVIGRAEAYASQRPPALAALDGLSIGLGSTCTLLLLGALREVLGNGTLFDGADQLLGAWARVLRIEVFHTDTPFLLAMLPPGAFIGLGFMLVGKYLIDQRMKARQPKAARPVVLQQGQPLADE</sequence>
<proteinExistence type="inferred from homology"/>
<comment type="function">
    <text evidence="1">Part of a membrane-bound complex that couples electron transfer with translocation of ions across the membrane.</text>
</comment>
<comment type="subunit">
    <text evidence="1">The complex is composed of six subunits: RnfA, RnfB, RnfC, RnfD, RnfE and RnfG.</text>
</comment>
<comment type="subcellular location">
    <subcellularLocation>
        <location evidence="1">Cell inner membrane</location>
        <topology evidence="1">Multi-pass membrane protein</topology>
    </subcellularLocation>
</comment>
<comment type="similarity">
    <text evidence="1">Belongs to the NqrDE/RnfAE family.</text>
</comment>
<dbReference type="EC" id="7.-.-.-" evidence="1"/>
<dbReference type="EMBL" id="AP008232">
    <property type="protein sequence ID" value="BAE74725.1"/>
    <property type="molecule type" value="Genomic_DNA"/>
</dbReference>
<dbReference type="RefSeq" id="WP_011411270.1">
    <property type="nucleotide sequence ID" value="NC_007712.1"/>
</dbReference>
<dbReference type="SMR" id="Q2NT00"/>
<dbReference type="STRING" id="343509.SG1450"/>
<dbReference type="KEGG" id="sgl:SG1450"/>
<dbReference type="eggNOG" id="COG4660">
    <property type="taxonomic scope" value="Bacteria"/>
</dbReference>
<dbReference type="HOGENOM" id="CLU_046659_1_0_6"/>
<dbReference type="OrthoDB" id="9782945at2"/>
<dbReference type="Proteomes" id="UP000001932">
    <property type="component" value="Chromosome"/>
</dbReference>
<dbReference type="GO" id="GO:0005886">
    <property type="term" value="C:plasma membrane"/>
    <property type="evidence" value="ECO:0007669"/>
    <property type="project" value="UniProtKB-SubCell"/>
</dbReference>
<dbReference type="GO" id="GO:0022900">
    <property type="term" value="P:electron transport chain"/>
    <property type="evidence" value="ECO:0007669"/>
    <property type="project" value="UniProtKB-UniRule"/>
</dbReference>
<dbReference type="HAMAP" id="MF_00478">
    <property type="entry name" value="RsxE_RnfE"/>
    <property type="match status" value="1"/>
</dbReference>
<dbReference type="InterPro" id="IPR003667">
    <property type="entry name" value="NqrDE/RnfAE"/>
</dbReference>
<dbReference type="InterPro" id="IPR010968">
    <property type="entry name" value="RnfE"/>
</dbReference>
<dbReference type="NCBIfam" id="NF009070">
    <property type="entry name" value="PRK12405.1"/>
    <property type="match status" value="1"/>
</dbReference>
<dbReference type="NCBIfam" id="TIGR01948">
    <property type="entry name" value="rnfE"/>
    <property type="match status" value="1"/>
</dbReference>
<dbReference type="PANTHER" id="PTHR30586">
    <property type="entry name" value="ELECTRON TRANSPORT COMPLEX PROTEIN RNFE"/>
    <property type="match status" value="1"/>
</dbReference>
<dbReference type="PANTHER" id="PTHR30586:SF0">
    <property type="entry name" value="ION-TRANSLOCATING OXIDOREDUCTASE COMPLEX SUBUNIT E"/>
    <property type="match status" value="1"/>
</dbReference>
<dbReference type="Pfam" id="PF02508">
    <property type="entry name" value="Rnf-Nqr"/>
    <property type="match status" value="1"/>
</dbReference>
<dbReference type="PIRSF" id="PIRSF006102">
    <property type="entry name" value="NQR_DE"/>
    <property type="match status" value="1"/>
</dbReference>
<feature type="chain" id="PRO_1000014113" description="Ion-translocating oxidoreductase complex subunit E">
    <location>
        <begin position="1"/>
        <end position="232"/>
    </location>
</feature>
<feature type="transmembrane region" description="Helical" evidence="1">
    <location>
        <begin position="12"/>
        <end position="31"/>
    </location>
</feature>
<feature type="transmembrane region" description="Helical" evidence="1">
    <location>
        <begin position="39"/>
        <end position="59"/>
    </location>
</feature>
<feature type="transmembrane region" description="Helical" evidence="1">
    <location>
        <begin position="69"/>
        <end position="89"/>
    </location>
</feature>
<feature type="transmembrane region" description="Helical" evidence="1">
    <location>
        <begin position="92"/>
        <end position="112"/>
    </location>
</feature>
<feature type="transmembrane region" description="Helical" evidence="1">
    <location>
        <begin position="125"/>
        <end position="145"/>
    </location>
</feature>
<feature type="transmembrane region" description="Helical" evidence="1">
    <location>
        <begin position="182"/>
        <end position="202"/>
    </location>
</feature>
<reference key="1">
    <citation type="journal article" date="2006" name="Genome Res.">
        <title>Massive genome erosion and functional adaptations provide insights into the symbiotic lifestyle of Sodalis glossinidius in the tsetse host.</title>
        <authorList>
            <person name="Toh H."/>
            <person name="Weiss B.L."/>
            <person name="Perkin S.A.H."/>
            <person name="Yamashita A."/>
            <person name="Oshima K."/>
            <person name="Hattori M."/>
            <person name="Aksoy S."/>
        </authorList>
    </citation>
    <scope>NUCLEOTIDE SEQUENCE [LARGE SCALE GENOMIC DNA]</scope>
    <source>
        <strain>morsitans</strain>
    </source>
</reference>
<protein>
    <recommendedName>
        <fullName evidence="1">Ion-translocating oxidoreductase complex subunit E</fullName>
        <ecNumber evidence="1">7.-.-.-</ecNumber>
    </recommendedName>
    <alternativeName>
        <fullName evidence="1">Rnf electron transport complex subunit E</fullName>
    </alternativeName>
</protein>